<sequence>MPNDLLKEYKNAWDKYDDKQLKEVFALGDRFKNFISNCKTERECVTELIKTAEKSGYRNIEDILAKGETLKEGDKVYANNRGKGLIMFLIGKEPLYTGFKILGAHIDSPRLDLKQNPLYEDTDLAMLETHYYGGIKKYQWVTLPLAIHGVIVKKDGTIVNVCVGEDDNDPVFGVSDILVHLASEQLEKKASKVIEGEDLNILIGSIPLKDGEEKQKVKHNIMKILNEKYDISEEDFVSAELEIVPAGKARDYGFDRSMVMGYGQDDRICAYTSFEAMLEMKNAKKTCITILVDKEEVGSIGATGMQSKFFENTVADIMSLCGDYDELKLRKALYNSEMLSSDVSAAFDPNYPNVMEKRNSAYLGKGIVFNKYTGSRGKSGCNDANPEYIAELRRILSKESVNWQTAELGKVDQGGGGTIAYILAEYGMQVIDCGVALLNMHAPWEISSKADIYETKNGYSAFLNN</sequence>
<keyword id="KW-0002">3D-structure</keyword>
<keyword id="KW-0031">Aminopeptidase</keyword>
<keyword id="KW-0378">Hydrolase</keyword>
<keyword id="KW-0479">Metal-binding</keyword>
<keyword id="KW-0482">Metalloprotease</keyword>
<keyword id="KW-0645">Protease</keyword>
<keyword id="KW-1185">Reference proteome</keyword>
<keyword id="KW-0862">Zinc</keyword>
<feature type="chain" id="PRO_0000173457" description="Probable M18 family aminopeptidase 1">
    <location>
        <begin position="1"/>
        <end position="465"/>
    </location>
</feature>
<feature type="binding site" evidence="2">
    <location>
        <position position="105"/>
    </location>
    <ligand>
        <name>Zn(2+)</name>
        <dbReference type="ChEBI" id="CHEBI:29105"/>
    </ligand>
</feature>
<feature type="binding site" evidence="2">
    <location>
        <position position="180"/>
    </location>
    <ligand>
        <name>Zn(2+)</name>
        <dbReference type="ChEBI" id="CHEBI:29105"/>
    </ligand>
</feature>
<feature type="binding site" evidence="2">
    <location>
        <position position="441"/>
    </location>
    <ligand>
        <name>Zn(2+)</name>
        <dbReference type="ChEBI" id="CHEBI:29105"/>
    </ligand>
</feature>
<feature type="turn" evidence="4">
    <location>
        <begin position="13"/>
        <end position="15"/>
    </location>
</feature>
<feature type="helix" evidence="4">
    <location>
        <begin position="20"/>
        <end position="26"/>
    </location>
</feature>
<feature type="helix" evidence="4">
    <location>
        <begin position="29"/>
        <end position="36"/>
    </location>
</feature>
<feature type="helix" evidence="4">
    <location>
        <begin position="45"/>
        <end position="51"/>
    </location>
</feature>
<feature type="turn" evidence="4">
    <location>
        <begin position="66"/>
        <end position="69"/>
    </location>
</feature>
<feature type="strand" evidence="4">
    <location>
        <begin position="77"/>
        <end position="80"/>
    </location>
</feature>
<feature type="turn" evidence="4">
    <location>
        <begin position="81"/>
        <end position="83"/>
    </location>
</feature>
<feature type="strand" evidence="4">
    <location>
        <begin position="84"/>
        <end position="87"/>
    </location>
</feature>
<feature type="helix" evidence="4">
    <location>
        <begin position="95"/>
        <end position="97"/>
    </location>
</feature>
<feature type="strand" evidence="4">
    <location>
        <begin position="100"/>
        <end position="105"/>
    </location>
</feature>
<feature type="strand" evidence="4">
    <location>
        <begin position="118"/>
        <end position="120"/>
    </location>
</feature>
<feature type="strand" evidence="4">
    <location>
        <begin position="122"/>
        <end position="127"/>
    </location>
</feature>
<feature type="strand" evidence="4">
    <location>
        <begin position="141"/>
        <end position="143"/>
    </location>
</feature>
<feature type="strand" evidence="4">
    <location>
        <begin position="145"/>
        <end position="147"/>
    </location>
</feature>
<feature type="strand" evidence="4">
    <location>
        <begin position="150"/>
        <end position="152"/>
    </location>
</feature>
<feature type="strand" evidence="4">
    <location>
        <begin position="158"/>
        <end position="160"/>
    </location>
</feature>
<feature type="helix" evidence="4">
    <location>
        <begin position="179"/>
        <end position="184"/>
    </location>
</feature>
<feature type="strand" evidence="4">
    <location>
        <begin position="200"/>
        <end position="202"/>
    </location>
</feature>
<feature type="helix" evidence="4">
    <location>
        <begin position="216"/>
        <end position="227"/>
    </location>
</feature>
<feature type="helix" evidence="4">
    <location>
        <begin position="236"/>
        <end position="238"/>
    </location>
</feature>
<feature type="strand" evidence="4">
    <location>
        <begin position="243"/>
        <end position="245"/>
    </location>
</feature>
<feature type="strand" evidence="4">
    <location>
        <begin position="250"/>
        <end position="253"/>
    </location>
</feature>
<feature type="strand" evidence="4">
    <location>
        <begin position="258"/>
        <end position="261"/>
    </location>
</feature>
<feature type="helix" evidence="4">
    <location>
        <begin position="264"/>
        <end position="278"/>
    </location>
</feature>
<feature type="strand" evidence="4">
    <location>
        <begin position="287"/>
        <end position="292"/>
    </location>
</feature>
<feature type="helix" evidence="4">
    <location>
        <begin position="295"/>
        <end position="297"/>
    </location>
</feature>
<feature type="turn" evidence="4">
    <location>
        <begin position="301"/>
        <end position="304"/>
    </location>
</feature>
<feature type="strand" evidence="4">
    <location>
        <begin position="305"/>
        <end position="307"/>
    </location>
</feature>
<feature type="helix" evidence="4">
    <location>
        <begin position="310"/>
        <end position="317"/>
    </location>
</feature>
<feature type="helix" evidence="4">
    <location>
        <begin position="331"/>
        <end position="334"/>
    </location>
</feature>
<feature type="strand" evidence="4">
    <location>
        <begin position="344"/>
        <end position="346"/>
    </location>
</feature>
<feature type="strand" evidence="4">
    <location>
        <begin position="367"/>
        <end position="371"/>
    </location>
</feature>
<feature type="helix" evidence="4">
    <location>
        <begin position="386"/>
        <end position="398"/>
    </location>
</feature>
<feature type="strand" evidence="4">
    <location>
        <begin position="403"/>
        <end position="405"/>
    </location>
</feature>
<feature type="strand" evidence="4">
    <location>
        <begin position="408"/>
        <end position="414"/>
    </location>
</feature>
<feature type="helix" evidence="4">
    <location>
        <begin position="420"/>
        <end position="424"/>
    </location>
</feature>
<feature type="turn" evidence="4">
    <location>
        <begin position="425"/>
        <end position="427"/>
    </location>
</feature>
<feature type="strand" evidence="4">
    <location>
        <begin position="436"/>
        <end position="439"/>
    </location>
</feature>
<feature type="strand" evidence="4">
    <location>
        <begin position="442"/>
        <end position="448"/>
    </location>
</feature>
<feature type="helix" evidence="4">
    <location>
        <begin position="449"/>
        <end position="460"/>
    </location>
</feature>
<name>APEA_CLOAB</name>
<evidence type="ECO:0000250" key="1"/>
<evidence type="ECO:0000255" key="2"/>
<evidence type="ECO:0000305" key="3"/>
<evidence type="ECO:0007829" key="4">
    <source>
        <dbReference type="PDB" id="2GLJ"/>
    </source>
</evidence>
<gene>
    <name type="primary">apeA</name>
    <name type="ordered locus">CA_C1091</name>
</gene>
<comment type="cofactor">
    <cofactor evidence="1">
        <name>Zn(2+)</name>
        <dbReference type="ChEBI" id="CHEBI:29105"/>
    </cofactor>
</comment>
<comment type="similarity">
    <text evidence="3">Belongs to the peptidase M18 family.</text>
</comment>
<organism>
    <name type="scientific">Clostridium acetobutylicum (strain ATCC 824 / DSM 792 / JCM 1419 / IAM 19013 / LMG 5710 / NBRC 13948 / NRRL B-527 / VKM B-1787 / 2291 / W)</name>
    <dbReference type="NCBI Taxonomy" id="272562"/>
    <lineage>
        <taxon>Bacteria</taxon>
        <taxon>Bacillati</taxon>
        <taxon>Bacillota</taxon>
        <taxon>Clostridia</taxon>
        <taxon>Eubacteriales</taxon>
        <taxon>Clostridiaceae</taxon>
        <taxon>Clostridium</taxon>
    </lineage>
</organism>
<reference key="1">
    <citation type="journal article" date="2001" name="J. Bacteriol.">
        <title>Genome sequence and comparative analysis of the solvent-producing bacterium Clostridium acetobutylicum.</title>
        <authorList>
            <person name="Noelling J."/>
            <person name="Breton G."/>
            <person name="Omelchenko M.V."/>
            <person name="Makarova K.S."/>
            <person name="Zeng Q."/>
            <person name="Gibson R."/>
            <person name="Lee H.M."/>
            <person name="Dubois J."/>
            <person name="Qiu D."/>
            <person name="Hitti J."/>
            <person name="Wolf Y.I."/>
            <person name="Tatusov R.L."/>
            <person name="Sabathe F."/>
            <person name="Doucette-Stamm L.A."/>
            <person name="Soucaille P."/>
            <person name="Daly M.J."/>
            <person name="Bennett G.N."/>
            <person name="Koonin E.V."/>
            <person name="Smith D.R."/>
        </authorList>
    </citation>
    <scope>NUCLEOTIDE SEQUENCE [LARGE SCALE GENOMIC DNA]</scope>
    <source>
        <strain>ATCC 824 / DSM 792 / JCM 1419 / IAM 19013 / LMG 5710 / NBRC 13948 / NRRL B-527 / VKM B-1787 / 2291 / W</strain>
    </source>
</reference>
<dbReference type="EC" id="3.4.11.-"/>
<dbReference type="EMBL" id="AE001437">
    <property type="protein sequence ID" value="AAK79065.1"/>
    <property type="molecule type" value="Genomic_DNA"/>
</dbReference>
<dbReference type="PIR" id="F97034">
    <property type="entry name" value="F97034"/>
</dbReference>
<dbReference type="RefSeq" id="NP_347725.1">
    <property type="nucleotide sequence ID" value="NC_003030.1"/>
</dbReference>
<dbReference type="RefSeq" id="WP_010964406.1">
    <property type="nucleotide sequence ID" value="NC_003030.1"/>
</dbReference>
<dbReference type="PDB" id="2GLJ">
    <property type="method" value="X-ray"/>
    <property type="resolution" value="3.20 A"/>
    <property type="chains" value="A/B/C/D/E/F/G/H/I/J/K/L/M/N/O/P/Q/R/S/T/U/V/W/X=5-465"/>
</dbReference>
<dbReference type="PDBsum" id="2GLJ"/>
<dbReference type="SMR" id="Q97K30"/>
<dbReference type="STRING" id="272562.CA_C1091"/>
<dbReference type="KEGG" id="cac:CA_C1091"/>
<dbReference type="PATRIC" id="fig|272562.8.peg.1299"/>
<dbReference type="eggNOG" id="COG1362">
    <property type="taxonomic scope" value="Bacteria"/>
</dbReference>
<dbReference type="HOGENOM" id="CLU_590123_0_0_9"/>
<dbReference type="OrthoDB" id="89722at2"/>
<dbReference type="EvolutionaryTrace" id="Q97K30"/>
<dbReference type="Proteomes" id="UP000000814">
    <property type="component" value="Chromosome"/>
</dbReference>
<dbReference type="GO" id="GO:0005737">
    <property type="term" value="C:cytoplasm"/>
    <property type="evidence" value="ECO:0007669"/>
    <property type="project" value="UniProtKB-ARBA"/>
</dbReference>
<dbReference type="GO" id="GO:0004177">
    <property type="term" value="F:aminopeptidase activity"/>
    <property type="evidence" value="ECO:0007669"/>
    <property type="project" value="UniProtKB-UniRule"/>
</dbReference>
<dbReference type="GO" id="GO:0008237">
    <property type="term" value="F:metallopeptidase activity"/>
    <property type="evidence" value="ECO:0007669"/>
    <property type="project" value="UniProtKB-UniRule"/>
</dbReference>
<dbReference type="GO" id="GO:0008270">
    <property type="term" value="F:zinc ion binding"/>
    <property type="evidence" value="ECO:0007669"/>
    <property type="project" value="UniProtKB-UniRule"/>
</dbReference>
<dbReference type="GO" id="GO:0006508">
    <property type="term" value="P:proteolysis"/>
    <property type="evidence" value="ECO:0007669"/>
    <property type="project" value="UniProtKB-UniRule"/>
</dbReference>
<dbReference type="CDD" id="cd05659">
    <property type="entry name" value="M18_API"/>
    <property type="match status" value="1"/>
</dbReference>
<dbReference type="FunFam" id="2.30.250.10:FF:000006">
    <property type="entry name" value="Probable M18 family aminopeptidase 1"/>
    <property type="match status" value="1"/>
</dbReference>
<dbReference type="Gene3D" id="2.30.250.10">
    <property type="entry name" value="Aminopeptidase i, Domain 2"/>
    <property type="match status" value="1"/>
</dbReference>
<dbReference type="Gene3D" id="3.40.630.10">
    <property type="entry name" value="Zn peptidases"/>
    <property type="match status" value="1"/>
</dbReference>
<dbReference type="HAMAP" id="MF_00466">
    <property type="entry name" value="Aminopeptidase_M18_1"/>
    <property type="match status" value="1"/>
</dbReference>
<dbReference type="InterPro" id="IPR022983">
    <property type="entry name" value="M18_aminopeptidase_1"/>
</dbReference>
<dbReference type="InterPro" id="IPR001948">
    <property type="entry name" value="Peptidase_M18"/>
</dbReference>
<dbReference type="InterPro" id="IPR023358">
    <property type="entry name" value="Peptidase_M18_dom2"/>
</dbReference>
<dbReference type="NCBIfam" id="NF002600">
    <property type="entry name" value="PRK02256.1"/>
    <property type="match status" value="1"/>
</dbReference>
<dbReference type="PANTHER" id="PTHR28570">
    <property type="entry name" value="ASPARTYL AMINOPEPTIDASE"/>
    <property type="match status" value="1"/>
</dbReference>
<dbReference type="PANTHER" id="PTHR28570:SF2">
    <property type="entry name" value="M18 FAMILY AMINOPEPTIDASE 1-RELATED"/>
    <property type="match status" value="1"/>
</dbReference>
<dbReference type="Pfam" id="PF02127">
    <property type="entry name" value="Peptidase_M18"/>
    <property type="match status" value="1"/>
</dbReference>
<dbReference type="PRINTS" id="PR00932">
    <property type="entry name" value="AMINO1PTASE"/>
</dbReference>
<dbReference type="SUPFAM" id="SSF101821">
    <property type="entry name" value="Aminopeptidase/glucanase lid domain"/>
    <property type="match status" value="1"/>
</dbReference>
<dbReference type="SUPFAM" id="SSF53187">
    <property type="entry name" value="Zn-dependent exopeptidases"/>
    <property type="match status" value="1"/>
</dbReference>
<protein>
    <recommendedName>
        <fullName>Probable M18 family aminopeptidase 1</fullName>
        <ecNumber>3.4.11.-</ecNumber>
    </recommendedName>
</protein>
<accession>Q97K30</accession>
<proteinExistence type="evidence at protein level"/>